<gene>
    <name type="primary">CGB</name>
</gene>
<accession>P07434</accession>
<name>CGHB_PAPAN</name>
<feature type="signal peptide" evidence="1">
    <location>
        <begin position="1"/>
        <end position="20"/>
    </location>
</feature>
<feature type="chain" id="PRO_0000011677" description="Choriogonadotropin subunit beta">
    <location>
        <begin position="21"/>
        <end position="165"/>
    </location>
</feature>
<feature type="region of interest" description="Disordered" evidence="2">
    <location>
        <begin position="131"/>
        <end position="165"/>
    </location>
</feature>
<feature type="glycosylation site" description="N-linked (GlcNAc...) asparagine" evidence="1">
    <location>
        <position position="33"/>
    </location>
</feature>
<feature type="glycosylation site" description="N-linked (GlcNAc...) asparagine" evidence="1">
    <location>
        <position position="50"/>
    </location>
</feature>
<feature type="glycosylation site" description="O-linked (GalNAc...) serine" evidence="1">
    <location>
        <position position="141"/>
    </location>
</feature>
<feature type="glycosylation site" description="O-linked (GalNAc...) serine" evidence="1">
    <location>
        <position position="147"/>
    </location>
</feature>
<feature type="glycosylation site" description="O-linked (GalNAc...) serine" evidence="1">
    <location>
        <position position="152"/>
    </location>
</feature>
<feature type="disulfide bond" evidence="1">
    <location>
        <begin position="29"/>
        <end position="77"/>
    </location>
</feature>
<feature type="disulfide bond" evidence="1">
    <location>
        <begin position="43"/>
        <end position="92"/>
    </location>
</feature>
<feature type="disulfide bond" evidence="1">
    <location>
        <begin position="46"/>
        <end position="130"/>
    </location>
</feature>
<feature type="disulfide bond" evidence="1">
    <location>
        <begin position="54"/>
        <end position="108"/>
    </location>
</feature>
<feature type="disulfide bond" evidence="1">
    <location>
        <begin position="58"/>
        <end position="110"/>
    </location>
</feature>
<feature type="disulfide bond" evidence="1">
    <location>
        <begin position="113"/>
        <end position="120"/>
    </location>
</feature>
<dbReference type="EMBL" id="M14966">
    <property type="protein sequence ID" value="AAA35383.1"/>
    <property type="molecule type" value="mRNA"/>
</dbReference>
<dbReference type="PIR" id="A25808">
    <property type="entry name" value="KTBAB"/>
</dbReference>
<dbReference type="RefSeq" id="NP_001106126.1">
    <property type="nucleotide sequence ID" value="NM_001112656.1"/>
</dbReference>
<dbReference type="SMR" id="P07434"/>
<dbReference type="STRING" id="9555.ENSPANP00000010071"/>
<dbReference type="GlyCosmos" id="P07434">
    <property type="glycosylation" value="5 sites, No reported glycans"/>
</dbReference>
<dbReference type="GeneID" id="100126757"/>
<dbReference type="CTD" id="100126757"/>
<dbReference type="eggNOG" id="ENOG502S49V">
    <property type="taxonomic scope" value="Eukaryota"/>
</dbReference>
<dbReference type="Proteomes" id="UP000028761">
    <property type="component" value="Unplaced"/>
</dbReference>
<dbReference type="GO" id="GO:0005737">
    <property type="term" value="C:cytoplasm"/>
    <property type="evidence" value="ECO:0007669"/>
    <property type="project" value="TreeGrafter"/>
</dbReference>
<dbReference type="GO" id="GO:0005615">
    <property type="term" value="C:extracellular space"/>
    <property type="evidence" value="ECO:0007669"/>
    <property type="project" value="TreeGrafter"/>
</dbReference>
<dbReference type="GO" id="GO:0005179">
    <property type="term" value="F:hormone activity"/>
    <property type="evidence" value="ECO:0007669"/>
    <property type="project" value="UniProtKB-KW"/>
</dbReference>
<dbReference type="GO" id="GO:0007186">
    <property type="term" value="P:G protein-coupled receptor signaling pathway"/>
    <property type="evidence" value="ECO:0007669"/>
    <property type="project" value="TreeGrafter"/>
</dbReference>
<dbReference type="CDD" id="cd00069">
    <property type="entry name" value="GHB_like"/>
    <property type="match status" value="1"/>
</dbReference>
<dbReference type="FunFam" id="2.10.90.10:FF:000007">
    <property type="entry name" value="Luteinizing hormone beta subunit"/>
    <property type="match status" value="1"/>
</dbReference>
<dbReference type="Gene3D" id="2.10.90.10">
    <property type="entry name" value="Cystine-knot cytokines"/>
    <property type="match status" value="1"/>
</dbReference>
<dbReference type="InterPro" id="IPR029034">
    <property type="entry name" value="Cystine-knot_cytokine"/>
</dbReference>
<dbReference type="InterPro" id="IPR006208">
    <property type="entry name" value="Glyco_hormone_CN"/>
</dbReference>
<dbReference type="InterPro" id="IPR001545">
    <property type="entry name" value="Gonadotropin_bsu"/>
</dbReference>
<dbReference type="InterPro" id="IPR018245">
    <property type="entry name" value="Gonadotropin_bsu_CS"/>
</dbReference>
<dbReference type="PANTHER" id="PTHR11515">
    <property type="entry name" value="GLYCOPROTEIN HORMONE BETA CHAIN"/>
    <property type="match status" value="1"/>
</dbReference>
<dbReference type="PANTHER" id="PTHR11515:SF11">
    <property type="entry name" value="LUTROPIN SUBUNIT BETA"/>
    <property type="match status" value="1"/>
</dbReference>
<dbReference type="Pfam" id="PF00007">
    <property type="entry name" value="Cys_knot"/>
    <property type="match status" value="1"/>
</dbReference>
<dbReference type="SMART" id="SM00068">
    <property type="entry name" value="GHB"/>
    <property type="match status" value="1"/>
</dbReference>
<dbReference type="SUPFAM" id="SSF57501">
    <property type="entry name" value="Cystine-knot cytokines"/>
    <property type="match status" value="1"/>
</dbReference>
<dbReference type="PROSITE" id="PS00261">
    <property type="entry name" value="GLYCO_HORMONE_BETA_1"/>
    <property type="match status" value="1"/>
</dbReference>
<dbReference type="PROSITE" id="PS00689">
    <property type="entry name" value="GLYCO_HORMONE_BETA_2"/>
    <property type="match status" value="1"/>
</dbReference>
<keyword id="KW-1015">Disulfide bond</keyword>
<keyword id="KW-0325">Glycoprotein</keyword>
<keyword id="KW-0372">Hormone</keyword>
<keyword id="KW-1185">Reference proteome</keyword>
<keyword id="KW-0964">Secreted</keyword>
<keyword id="KW-0732">Signal</keyword>
<comment type="function">
    <text>Stimulates the ovaries to synthesize the steroids that are essential for the maintenance of pregnancy.</text>
</comment>
<comment type="subunit">
    <text>Heterodimer of a common alpha chain and a unique beta chain which confers biological specificity to thyrotropin, lutropin, follitropin and gonadotropin.</text>
</comment>
<comment type="subcellular location">
    <subcellularLocation>
        <location>Secreted</location>
    </subcellularLocation>
</comment>
<comment type="tissue specificity">
    <text>Placenta.</text>
</comment>
<comment type="miscellaneous">
    <text>There are at least five copies of CG-related genes and at least two of these are expressed in the baboon placenta.</text>
</comment>
<comment type="similarity">
    <text evidence="3">Belongs to the glycoprotein hormones subunit beta family.</text>
</comment>
<sequence>METLQGLLLWLLLSMGGAQASREPLRPLCRPINATLAAEKEACPVCVTVNTTICAGYCPTMMRVLQAVLPPVPQVVCNYREVRFESIRLPGCPPGVDPMVSVPVALSCRCALCRRSTSDCGGPKDHPLTCDDPNLQASSSSKDPPPSPPSPSRLLEPAGTPFLPQ</sequence>
<proteinExistence type="evidence at transcript level"/>
<evidence type="ECO:0000250" key="1"/>
<evidence type="ECO:0000256" key="2">
    <source>
        <dbReference type="SAM" id="MobiDB-lite"/>
    </source>
</evidence>
<evidence type="ECO:0000305" key="3"/>
<protein>
    <recommendedName>
        <fullName>Choriogonadotropin subunit beta</fullName>
        <shortName>CG-beta</shortName>
    </recommendedName>
    <alternativeName>
        <fullName>Chorionic gonadotrophin chain beta</fullName>
    </alternativeName>
</protein>
<organism>
    <name type="scientific">Papio anubis</name>
    <name type="common">Olive baboon</name>
    <dbReference type="NCBI Taxonomy" id="9555"/>
    <lineage>
        <taxon>Eukaryota</taxon>
        <taxon>Metazoa</taxon>
        <taxon>Chordata</taxon>
        <taxon>Craniata</taxon>
        <taxon>Vertebrata</taxon>
        <taxon>Euteleostomi</taxon>
        <taxon>Mammalia</taxon>
        <taxon>Eutheria</taxon>
        <taxon>Euarchontoglires</taxon>
        <taxon>Primates</taxon>
        <taxon>Haplorrhini</taxon>
        <taxon>Catarrhini</taxon>
        <taxon>Cercopithecidae</taxon>
        <taxon>Cercopithecinae</taxon>
        <taxon>Papio</taxon>
    </lineage>
</organism>
<reference key="1">
    <citation type="journal article" date="1986" name="Gene">
        <title>The nucleotide sequences of baboon chorionic gonadotropin beta-subunit genes have diverged from the human.</title>
        <authorList>
            <person name="Crawford R.J."/>
            <person name="Tregear G.W."/>
            <person name="Niall H.D."/>
        </authorList>
    </citation>
    <scope>NUCLEOTIDE SEQUENCE [MRNA]</scope>
</reference>